<sequence length="1083" mass="124171">MHLTIHNAHNGLTTSIQKPIRYHSYQSFKEYIVESFTNYILDDANNVFLLTQFGMRVDFNIINELNDIYFFDKRLFVNENPASILKDYATQTMRDIPPPKHPSLAPYSRGLNIRQMSSSLRSNAGWSMSVKVDAALADEQVRAYKRQISVMFRCLSIMFEFIASFTSDIENSFTKFYNHINQLSLKTLHEHWKSHYKTLASRPQFTFKNGKSVRLADMLNYDALVEASQFVERNLSTVIDQFNQLSATINEVNKSKIDIDGEIQVLRDESIAEFASLKASESLVEDIKSIGTAISTEIDSIASSESRVLGDIYTKHVESSKKLDEKYVQLYNDLTKLDQFKDKLAEKGTALFRHCARLQMQMVNVKLALNEFDSRKQEGKQRSAMQKVQEIKKKEEYLSLTIDLPLLFGFAIIEMRRQYEWYDFFASGAVSNVTEQLQVIINQERVFRKIWAKKIGSFLSILDSLPSDLSQTLPSLDVTVVKGREDFFGKFWIHDIQREDIDKYIKWVGSIDAGKHANFSMLLERNFEDLIKSTNAMKSVTKAIGTLSSYTSPENIDAVQPNDKKEDQDLIQGYKNRIRKLENLLHQQQFKDLSTWPVIKGATQDQSIIFNPKRNSGVGSDNVLVHSQHDAKILLQNHRSSIKDESSSRTDHLKLAKENEDLRKRLQELQIGGERRVEAKVPFEASLSGTKILAQQNTEILAQKKALEMKVDSQLQVIEKIQKESSEKDNEIFALKKQIQDLTGEANEFYARNEELKKNAEVKYDHLVQELNEEKDKSSSLSSELDAMKRGANDRKDAEKAIAELTSVASDLYGKLVDHSHITFDYVLTLSYILEKMGLMLTNEEGKNNVFKIRRVKGLRSRKQDGENSQTDVGSPVPGAIKNMMVWSHTDINVNPADMIESAKEIINVCRNKMDETFDKYNQVVAFRSNVSIEQVSEHDIRTIEFFSNAVVKRFKDVEGLAKKLAKEKKTYETQLQKLTRKMSAKVTLSNFQTNDLVLFLPTRLETKEPQEVIQPWTAFNIGTPHYFLKSQPSVEREWIVARIVSIVEHTVTATNKNDTSLNPYRLSEGITWFSVEAKEVSQ</sequence>
<feature type="chain" id="PRO_0000317924" description="Autophagy-related protein 11">
    <location>
        <begin position="1"/>
        <end position="1083"/>
    </location>
</feature>
<feature type="coiled-coil region" evidence="2">
    <location>
        <begin position="562"/>
        <end position="591"/>
    </location>
</feature>
<feature type="coiled-coil region" evidence="2">
    <location>
        <begin position="648"/>
        <end position="812"/>
    </location>
</feature>
<feature type="coiled-coil region" evidence="2">
    <location>
        <begin position="953"/>
        <end position="988"/>
    </location>
</feature>
<keyword id="KW-0072">Autophagy</keyword>
<keyword id="KW-0175">Coiled coil</keyword>
<keyword id="KW-0472">Membrane</keyword>
<keyword id="KW-0653">Protein transport</keyword>
<keyword id="KW-1185">Reference proteome</keyword>
<keyword id="KW-0813">Transport</keyword>
<keyword id="KW-0926">Vacuole</keyword>
<gene>
    <name type="primary">ATG11</name>
    <name type="ORF">PGUG_05234</name>
</gene>
<proteinExistence type="inferred from homology"/>
<evidence type="ECO:0000250" key="1"/>
<evidence type="ECO:0000255" key="2"/>
<evidence type="ECO:0000305" key="3"/>
<protein>
    <recommendedName>
        <fullName>Autophagy-related protein 11</fullName>
    </recommendedName>
</protein>
<accession>A5DPN3</accession>
<name>ATG11_PICGU</name>
<reference key="1">
    <citation type="journal article" date="2009" name="Nature">
        <title>Evolution of pathogenicity and sexual reproduction in eight Candida genomes.</title>
        <authorList>
            <person name="Butler G."/>
            <person name="Rasmussen M.D."/>
            <person name="Lin M.F."/>
            <person name="Santos M.A.S."/>
            <person name="Sakthikumar S."/>
            <person name="Munro C.A."/>
            <person name="Rheinbay E."/>
            <person name="Grabherr M."/>
            <person name="Forche A."/>
            <person name="Reedy J.L."/>
            <person name="Agrafioti I."/>
            <person name="Arnaud M.B."/>
            <person name="Bates S."/>
            <person name="Brown A.J.P."/>
            <person name="Brunke S."/>
            <person name="Costanzo M.C."/>
            <person name="Fitzpatrick D.A."/>
            <person name="de Groot P.W.J."/>
            <person name="Harris D."/>
            <person name="Hoyer L.L."/>
            <person name="Hube B."/>
            <person name="Klis F.M."/>
            <person name="Kodira C."/>
            <person name="Lennard N."/>
            <person name="Logue M.E."/>
            <person name="Martin R."/>
            <person name="Neiman A.M."/>
            <person name="Nikolaou E."/>
            <person name="Quail M.A."/>
            <person name="Quinn J."/>
            <person name="Santos M.C."/>
            <person name="Schmitzberger F.F."/>
            <person name="Sherlock G."/>
            <person name="Shah P."/>
            <person name="Silverstein K.A.T."/>
            <person name="Skrzypek M.S."/>
            <person name="Soll D."/>
            <person name="Staggs R."/>
            <person name="Stansfield I."/>
            <person name="Stumpf M.P.H."/>
            <person name="Sudbery P.E."/>
            <person name="Srikantha T."/>
            <person name="Zeng Q."/>
            <person name="Berman J."/>
            <person name="Berriman M."/>
            <person name="Heitman J."/>
            <person name="Gow N.A.R."/>
            <person name="Lorenz M.C."/>
            <person name="Birren B.W."/>
            <person name="Kellis M."/>
            <person name="Cuomo C.A."/>
        </authorList>
    </citation>
    <scope>NUCLEOTIDE SEQUENCE [LARGE SCALE GENOMIC DNA]</scope>
    <source>
        <strain>ATCC 6260 / CBS 566 / DSM 6381 / JCM 1539 / NBRC 10279 / NRRL Y-324</strain>
    </source>
</reference>
<comment type="function">
    <text evidence="1">Involved in cytoplasm to vacuole transport (Cvt), pexophagy, mitophagy and nucleophagy. Recruits mitochondria for their selective degradation via autophagy (mitophagy) during starvation. Works as scaffold proteins that recruit ATG proteins to the pre-autophagosome (PAS), the site of vesicle/autophagosome formation. Required for the Cvt vesicles completion (By similarity).</text>
</comment>
<comment type="subunit">
    <text evidence="1">Homodimer.</text>
</comment>
<comment type="subcellular location">
    <subcellularLocation>
        <location evidence="1">Preautophagosomal structure membrane</location>
        <topology evidence="1">Peripheral membrane protein</topology>
    </subcellularLocation>
    <subcellularLocation>
        <location evidence="1">Vacuole membrane</location>
        <topology evidence="1">Peripheral membrane protein</topology>
    </subcellularLocation>
    <text evidence="1">During pexophagy, accumulates in the vacuolar membrane region, where the peroxisomes contact the vacuole.</text>
</comment>
<comment type="similarity">
    <text evidence="3">Belongs to the ATG11 family.</text>
</comment>
<organism>
    <name type="scientific">Meyerozyma guilliermondii (strain ATCC 6260 / CBS 566 / DSM 6381 / JCM 1539 / NBRC 10279 / NRRL Y-324)</name>
    <name type="common">Yeast</name>
    <name type="synonym">Candida guilliermondii</name>
    <dbReference type="NCBI Taxonomy" id="294746"/>
    <lineage>
        <taxon>Eukaryota</taxon>
        <taxon>Fungi</taxon>
        <taxon>Dikarya</taxon>
        <taxon>Ascomycota</taxon>
        <taxon>Saccharomycotina</taxon>
        <taxon>Pichiomycetes</taxon>
        <taxon>Debaryomycetaceae</taxon>
        <taxon>Meyerozyma</taxon>
    </lineage>
</organism>
<dbReference type="EMBL" id="CH408161">
    <property type="protein sequence ID" value="EDK41136.2"/>
    <property type="molecule type" value="Genomic_DNA"/>
</dbReference>
<dbReference type="RefSeq" id="XP_001482214.1">
    <property type="nucleotide sequence ID" value="XM_001482164.1"/>
</dbReference>
<dbReference type="SMR" id="A5DPN3"/>
<dbReference type="FunCoup" id="A5DPN3">
    <property type="interactions" value="155"/>
</dbReference>
<dbReference type="STRING" id="294746.A5DPN3"/>
<dbReference type="GeneID" id="5124187"/>
<dbReference type="KEGG" id="pgu:PGUG_05234"/>
<dbReference type="VEuPathDB" id="FungiDB:PGUG_05234"/>
<dbReference type="eggNOG" id="ENOG502QVZE">
    <property type="taxonomic scope" value="Eukaryota"/>
</dbReference>
<dbReference type="HOGENOM" id="CLU_002803_1_0_1"/>
<dbReference type="InParanoid" id="A5DPN3"/>
<dbReference type="OMA" id="EIDVHYF"/>
<dbReference type="OrthoDB" id="447953at2759"/>
<dbReference type="Proteomes" id="UP000001997">
    <property type="component" value="Unassembled WGS sequence"/>
</dbReference>
<dbReference type="GO" id="GO:1990316">
    <property type="term" value="C:Atg1/ULK1 kinase complex"/>
    <property type="evidence" value="ECO:0007669"/>
    <property type="project" value="TreeGrafter"/>
</dbReference>
<dbReference type="GO" id="GO:0034045">
    <property type="term" value="C:phagophore assembly site membrane"/>
    <property type="evidence" value="ECO:0007669"/>
    <property type="project" value="UniProtKB-SubCell"/>
</dbReference>
<dbReference type="GO" id="GO:0005774">
    <property type="term" value="C:vacuolar membrane"/>
    <property type="evidence" value="ECO:0007669"/>
    <property type="project" value="UniProtKB-SubCell"/>
</dbReference>
<dbReference type="GO" id="GO:0060090">
    <property type="term" value="F:molecular adaptor activity"/>
    <property type="evidence" value="ECO:0007669"/>
    <property type="project" value="TreeGrafter"/>
</dbReference>
<dbReference type="GO" id="GO:0019901">
    <property type="term" value="F:protein kinase binding"/>
    <property type="evidence" value="ECO:0007669"/>
    <property type="project" value="TreeGrafter"/>
</dbReference>
<dbReference type="GO" id="GO:0000045">
    <property type="term" value="P:autophagosome assembly"/>
    <property type="evidence" value="ECO:0007669"/>
    <property type="project" value="InterPro"/>
</dbReference>
<dbReference type="GO" id="GO:0000422">
    <property type="term" value="P:autophagy of mitochondrion"/>
    <property type="evidence" value="ECO:0007669"/>
    <property type="project" value="TreeGrafter"/>
</dbReference>
<dbReference type="GO" id="GO:0034727">
    <property type="term" value="P:piecemeal microautophagy of the nucleus"/>
    <property type="evidence" value="ECO:0007669"/>
    <property type="project" value="TreeGrafter"/>
</dbReference>
<dbReference type="GO" id="GO:0015031">
    <property type="term" value="P:protein transport"/>
    <property type="evidence" value="ECO:0007669"/>
    <property type="project" value="UniProtKB-KW"/>
</dbReference>
<dbReference type="GO" id="GO:0061709">
    <property type="term" value="P:reticulophagy"/>
    <property type="evidence" value="ECO:0007669"/>
    <property type="project" value="TreeGrafter"/>
</dbReference>
<dbReference type="GO" id="GO:0034517">
    <property type="term" value="P:ribophagy"/>
    <property type="evidence" value="ECO:0007669"/>
    <property type="project" value="TreeGrafter"/>
</dbReference>
<dbReference type="InterPro" id="IPR040040">
    <property type="entry name" value="ATG11"/>
</dbReference>
<dbReference type="InterPro" id="IPR019460">
    <property type="entry name" value="Atg11_C"/>
</dbReference>
<dbReference type="InterPro" id="IPR045326">
    <property type="entry name" value="ATG17-like_dom"/>
</dbReference>
<dbReference type="PANTHER" id="PTHR13222">
    <property type="entry name" value="RB1-INDUCIBLE COILED-COIL"/>
    <property type="match status" value="1"/>
</dbReference>
<dbReference type="PANTHER" id="PTHR13222:SF1">
    <property type="entry name" value="RB1-INDUCIBLE COILED-COIL PROTEIN 1"/>
    <property type="match status" value="1"/>
</dbReference>
<dbReference type="Pfam" id="PF10377">
    <property type="entry name" value="ATG11"/>
    <property type="match status" value="1"/>
</dbReference>
<dbReference type="Pfam" id="PF04108">
    <property type="entry name" value="ATG17_like"/>
    <property type="match status" value="1"/>
</dbReference>